<keyword id="KW-0067">ATP-binding</keyword>
<keyword id="KW-0963">Cytoplasm</keyword>
<keyword id="KW-0436">Ligase</keyword>
<keyword id="KW-0547">Nucleotide-binding</keyword>
<keyword id="KW-0658">Purine biosynthesis</keyword>
<keyword id="KW-1185">Reference proteome</keyword>
<feature type="chain" id="PRO_0000258358" description="Phosphoribosylformylglycinamidine cyclo-ligase">
    <location>
        <begin position="1"/>
        <end position="348"/>
    </location>
</feature>
<dbReference type="EC" id="6.3.3.1" evidence="1"/>
<dbReference type="EMBL" id="AE017180">
    <property type="protein sequence ID" value="AAR35135.1"/>
    <property type="molecule type" value="Genomic_DNA"/>
</dbReference>
<dbReference type="RefSeq" id="NP_952808.1">
    <property type="nucleotide sequence ID" value="NC_002939.5"/>
</dbReference>
<dbReference type="RefSeq" id="WP_010942402.1">
    <property type="nucleotide sequence ID" value="NC_002939.5"/>
</dbReference>
<dbReference type="SMR" id="Q74CB6"/>
<dbReference type="FunCoup" id="Q74CB6">
    <property type="interactions" value="543"/>
</dbReference>
<dbReference type="STRING" id="243231.GSU1758"/>
<dbReference type="EnsemblBacteria" id="AAR35135">
    <property type="protein sequence ID" value="AAR35135"/>
    <property type="gene ID" value="GSU1758"/>
</dbReference>
<dbReference type="KEGG" id="gsu:GSU1758"/>
<dbReference type="PATRIC" id="fig|243231.5.peg.1798"/>
<dbReference type="eggNOG" id="COG0150">
    <property type="taxonomic scope" value="Bacteria"/>
</dbReference>
<dbReference type="HOGENOM" id="CLU_047116_0_0_7"/>
<dbReference type="InParanoid" id="Q74CB6"/>
<dbReference type="OrthoDB" id="9777881at2"/>
<dbReference type="UniPathway" id="UPA00074">
    <property type="reaction ID" value="UER00129"/>
</dbReference>
<dbReference type="Proteomes" id="UP000000577">
    <property type="component" value="Chromosome"/>
</dbReference>
<dbReference type="GO" id="GO:0005829">
    <property type="term" value="C:cytosol"/>
    <property type="evidence" value="ECO:0000318"/>
    <property type="project" value="GO_Central"/>
</dbReference>
<dbReference type="GO" id="GO:0005524">
    <property type="term" value="F:ATP binding"/>
    <property type="evidence" value="ECO:0007669"/>
    <property type="project" value="UniProtKB-KW"/>
</dbReference>
<dbReference type="GO" id="GO:0004637">
    <property type="term" value="F:phosphoribosylamine-glycine ligase activity"/>
    <property type="evidence" value="ECO:0000318"/>
    <property type="project" value="GO_Central"/>
</dbReference>
<dbReference type="GO" id="GO:0004641">
    <property type="term" value="F:phosphoribosylformylglycinamidine cyclo-ligase activity"/>
    <property type="evidence" value="ECO:0000318"/>
    <property type="project" value="GO_Central"/>
</dbReference>
<dbReference type="GO" id="GO:0006189">
    <property type="term" value="P:'de novo' IMP biosynthetic process"/>
    <property type="evidence" value="ECO:0007669"/>
    <property type="project" value="UniProtKB-UniRule"/>
</dbReference>
<dbReference type="GO" id="GO:0046084">
    <property type="term" value="P:adenine biosynthetic process"/>
    <property type="evidence" value="ECO:0000318"/>
    <property type="project" value="GO_Central"/>
</dbReference>
<dbReference type="GO" id="GO:0006164">
    <property type="term" value="P:purine nucleotide biosynthetic process"/>
    <property type="evidence" value="ECO:0000318"/>
    <property type="project" value="GO_Central"/>
</dbReference>
<dbReference type="CDD" id="cd02196">
    <property type="entry name" value="PurM"/>
    <property type="match status" value="1"/>
</dbReference>
<dbReference type="FunFam" id="3.30.1330.10:FF:000001">
    <property type="entry name" value="Phosphoribosylformylglycinamidine cyclo-ligase"/>
    <property type="match status" value="1"/>
</dbReference>
<dbReference type="FunFam" id="3.90.650.10:FF:000001">
    <property type="entry name" value="Phosphoribosylformylglycinamidine cyclo-ligase"/>
    <property type="match status" value="1"/>
</dbReference>
<dbReference type="Gene3D" id="3.90.650.10">
    <property type="entry name" value="PurM-like C-terminal domain"/>
    <property type="match status" value="1"/>
</dbReference>
<dbReference type="Gene3D" id="3.30.1330.10">
    <property type="entry name" value="PurM-like, N-terminal domain"/>
    <property type="match status" value="1"/>
</dbReference>
<dbReference type="HAMAP" id="MF_00741">
    <property type="entry name" value="AIRS"/>
    <property type="match status" value="1"/>
</dbReference>
<dbReference type="InterPro" id="IPR010918">
    <property type="entry name" value="PurM-like_C_dom"/>
</dbReference>
<dbReference type="InterPro" id="IPR036676">
    <property type="entry name" value="PurM-like_C_sf"/>
</dbReference>
<dbReference type="InterPro" id="IPR016188">
    <property type="entry name" value="PurM-like_N"/>
</dbReference>
<dbReference type="InterPro" id="IPR036921">
    <property type="entry name" value="PurM-like_N_sf"/>
</dbReference>
<dbReference type="InterPro" id="IPR004733">
    <property type="entry name" value="PurM_cligase"/>
</dbReference>
<dbReference type="NCBIfam" id="TIGR00878">
    <property type="entry name" value="purM"/>
    <property type="match status" value="1"/>
</dbReference>
<dbReference type="PANTHER" id="PTHR10520:SF12">
    <property type="entry name" value="TRIFUNCTIONAL PURINE BIOSYNTHETIC PROTEIN ADENOSINE-3"/>
    <property type="match status" value="1"/>
</dbReference>
<dbReference type="PANTHER" id="PTHR10520">
    <property type="entry name" value="TRIFUNCTIONAL PURINE BIOSYNTHETIC PROTEIN ADENOSINE-3-RELATED"/>
    <property type="match status" value="1"/>
</dbReference>
<dbReference type="Pfam" id="PF00586">
    <property type="entry name" value="AIRS"/>
    <property type="match status" value="1"/>
</dbReference>
<dbReference type="Pfam" id="PF02769">
    <property type="entry name" value="AIRS_C"/>
    <property type="match status" value="1"/>
</dbReference>
<dbReference type="SUPFAM" id="SSF56042">
    <property type="entry name" value="PurM C-terminal domain-like"/>
    <property type="match status" value="1"/>
</dbReference>
<dbReference type="SUPFAM" id="SSF55326">
    <property type="entry name" value="PurM N-terminal domain-like"/>
    <property type="match status" value="1"/>
</dbReference>
<protein>
    <recommendedName>
        <fullName evidence="1">Phosphoribosylformylglycinamidine cyclo-ligase</fullName>
        <ecNumber evidence="1">6.3.3.1</ecNumber>
    </recommendedName>
    <alternativeName>
        <fullName evidence="1">AIR synthase</fullName>
    </alternativeName>
    <alternativeName>
        <fullName evidence="1">AIRS</fullName>
    </alternativeName>
    <alternativeName>
        <fullName evidence="1">Phosphoribosyl-aminoimidazole synthetase</fullName>
    </alternativeName>
</protein>
<reference key="1">
    <citation type="journal article" date="2003" name="Science">
        <title>Genome of Geobacter sulfurreducens: metal reduction in subsurface environments.</title>
        <authorList>
            <person name="Methe B.A."/>
            <person name="Nelson K.E."/>
            <person name="Eisen J.A."/>
            <person name="Paulsen I.T."/>
            <person name="Nelson W.C."/>
            <person name="Heidelberg J.F."/>
            <person name="Wu D."/>
            <person name="Wu M."/>
            <person name="Ward N.L."/>
            <person name="Beanan M.J."/>
            <person name="Dodson R.J."/>
            <person name="Madupu R."/>
            <person name="Brinkac L.M."/>
            <person name="Daugherty S.C."/>
            <person name="DeBoy R.T."/>
            <person name="Durkin A.S."/>
            <person name="Gwinn M.L."/>
            <person name="Kolonay J.F."/>
            <person name="Sullivan S.A."/>
            <person name="Haft D.H."/>
            <person name="Selengut J."/>
            <person name="Davidsen T.M."/>
            <person name="Zafar N."/>
            <person name="White O."/>
            <person name="Tran B."/>
            <person name="Romero C."/>
            <person name="Forberger H.A."/>
            <person name="Weidman J.F."/>
            <person name="Khouri H.M."/>
            <person name="Feldblyum T.V."/>
            <person name="Utterback T.R."/>
            <person name="Van Aken S.E."/>
            <person name="Lovley D.R."/>
            <person name="Fraser C.M."/>
        </authorList>
    </citation>
    <scope>NUCLEOTIDE SEQUENCE [LARGE SCALE GENOMIC DNA]</scope>
    <source>
        <strain>ATCC 51573 / DSM 12127 / PCA</strain>
    </source>
</reference>
<gene>
    <name evidence="1" type="primary">purM</name>
    <name type="ordered locus">GSU1758</name>
</gene>
<name>PUR5_GEOSL</name>
<organism>
    <name type="scientific">Geobacter sulfurreducens (strain ATCC 51573 / DSM 12127 / PCA)</name>
    <dbReference type="NCBI Taxonomy" id="243231"/>
    <lineage>
        <taxon>Bacteria</taxon>
        <taxon>Pseudomonadati</taxon>
        <taxon>Thermodesulfobacteriota</taxon>
        <taxon>Desulfuromonadia</taxon>
        <taxon>Geobacterales</taxon>
        <taxon>Geobacteraceae</taxon>
        <taxon>Geobacter</taxon>
    </lineage>
</organism>
<evidence type="ECO:0000255" key="1">
    <source>
        <dbReference type="HAMAP-Rule" id="MF_00741"/>
    </source>
</evidence>
<accession>Q74CB6</accession>
<comment type="catalytic activity">
    <reaction evidence="1">
        <text>2-formamido-N(1)-(5-O-phospho-beta-D-ribosyl)acetamidine + ATP = 5-amino-1-(5-phospho-beta-D-ribosyl)imidazole + ADP + phosphate + H(+)</text>
        <dbReference type="Rhea" id="RHEA:23032"/>
        <dbReference type="ChEBI" id="CHEBI:15378"/>
        <dbReference type="ChEBI" id="CHEBI:30616"/>
        <dbReference type="ChEBI" id="CHEBI:43474"/>
        <dbReference type="ChEBI" id="CHEBI:137981"/>
        <dbReference type="ChEBI" id="CHEBI:147287"/>
        <dbReference type="ChEBI" id="CHEBI:456216"/>
        <dbReference type="EC" id="6.3.3.1"/>
    </reaction>
</comment>
<comment type="pathway">
    <text evidence="1">Purine metabolism; IMP biosynthesis via de novo pathway; 5-amino-1-(5-phospho-D-ribosyl)imidazole from N(2)-formyl-N(1)-(5-phospho-D-ribosyl)glycinamide: step 2/2.</text>
</comment>
<comment type="subcellular location">
    <subcellularLocation>
        <location evidence="1">Cytoplasm</location>
    </subcellularLocation>
</comment>
<comment type="similarity">
    <text evidence="1">Belongs to the AIR synthase family.</text>
</comment>
<sequence length="348" mass="36841">MTKRGFTYKDAGVDIDAGNTFVGLIKPFVKATSRPEVISDIGGFGGLFSLNTNKYRNPVLVSGTDGVGTKLKIAMMADRHDTVGIDLVAMCVNDIIVQGAEPLFFLDYFATGKLDPQRGAAVVKGISEGCVQAGCALIGGETAEMPGFYQPGEYDLAGFTVGVVERDNIIDGSSITVGNRLVGIASSGLHSNGYSLARKIIFESMGLGIDSILPGLGMSAADALLTPTKIYVKTILNLLRDFHVNGIAHITGGGLLENVPRVLPNGCKALVHLDSCPLPPLFSLLQEAGSVERDEMYRTFNCGIGMVLAVPENEADEILIRLSGLQEKAFIIGEIAKCEPGAEMVELV</sequence>
<proteinExistence type="inferred from homology"/>